<sequence length="587" mass="62336">MASSSSAASLFATECLLYSTASSSTLVGSMGLTTVAAPSSTSALFTFKGVSDPAFHSVTVIPTSPNPAISGTGGLIFQLESNKAALNIFSWQRDHLLQRIILPSKLSCIACSPNGDLVAGGSFDGRILLWQIATGDLLASFDAHYRSVTVLKWTCDGAGLLTGSEDARILVWSLAGLLAPHDQTSSSITSSEHNPAPYCTLADHNLAITDLDISSGRFPHQAMVLSSSSDASVKLWDLRTRSLLSTFVFEQPIHRVVLDCTERFFFAATAPTSSDNLVYRIDLFRKRDASSRMVETKQATTGSQFDFVTDELRGASSVEAHGFGSAAGPTTERIPSARDVAHRAESNGSSIISIREPISSMCLSTNSTSLLVGSVAGNLFVIDVSNSQVVRTVSLLGNAKVSAISDKNAVTNLMVLPKPRDLLGHWETLSSSGTGSSMSGSGGVGGAGAPVGIPVRPIASSFGHHVLASEEDRLSKPYLTRISGNKTTLAFDEHNVDSFIDPEWDSHLVSSELLGRSTSALLSPSQTQSGAPPSTSAIHAQAALEAERLQRENKLLRSQLHQAKAINDEMWSRLVQDRLSVNQVDSE</sequence>
<organism>
    <name type="scientific">Mycosarcoma maydis</name>
    <name type="common">Corn smut fungus</name>
    <name type="synonym">Ustilago maydis</name>
    <dbReference type="NCBI Taxonomy" id="5270"/>
    <lineage>
        <taxon>Eukaryota</taxon>
        <taxon>Fungi</taxon>
        <taxon>Dikarya</taxon>
        <taxon>Basidiomycota</taxon>
        <taxon>Ustilaginomycotina</taxon>
        <taxon>Ustilaginomycetes</taxon>
        <taxon>Ustilaginales</taxon>
        <taxon>Ustilaginaceae</taxon>
        <taxon>Mycosarcoma</taxon>
    </lineage>
</organism>
<reference key="1">
    <citation type="journal article" date="2006" name="Nature">
        <title>Insights from the genome of the biotrophic fungal plant pathogen Ustilago maydis.</title>
        <authorList>
            <person name="Kaemper J."/>
            <person name="Kahmann R."/>
            <person name="Boelker M."/>
            <person name="Ma L.-J."/>
            <person name="Brefort T."/>
            <person name="Saville B.J."/>
            <person name="Banuett F."/>
            <person name="Kronstad J.W."/>
            <person name="Gold S.E."/>
            <person name="Mueller O."/>
            <person name="Perlin M.H."/>
            <person name="Woesten H.A.B."/>
            <person name="de Vries R."/>
            <person name="Ruiz-Herrera J."/>
            <person name="Reynaga-Pena C.G."/>
            <person name="Snetselaar K."/>
            <person name="McCann M."/>
            <person name="Perez-Martin J."/>
            <person name="Feldbruegge M."/>
            <person name="Basse C.W."/>
            <person name="Steinberg G."/>
            <person name="Ibeas J.I."/>
            <person name="Holloman W."/>
            <person name="Guzman P."/>
            <person name="Farman M.L."/>
            <person name="Stajich J.E."/>
            <person name="Sentandreu R."/>
            <person name="Gonzalez-Prieto J.M."/>
            <person name="Kennell J.C."/>
            <person name="Molina L."/>
            <person name="Schirawski J."/>
            <person name="Mendoza-Mendoza A."/>
            <person name="Greilinger D."/>
            <person name="Muench K."/>
            <person name="Roessel N."/>
            <person name="Scherer M."/>
            <person name="Vranes M."/>
            <person name="Ladendorf O."/>
            <person name="Vincon V."/>
            <person name="Fuchs U."/>
            <person name="Sandrock B."/>
            <person name="Meng S."/>
            <person name="Ho E.C.H."/>
            <person name="Cahill M.J."/>
            <person name="Boyce K.J."/>
            <person name="Klose J."/>
            <person name="Klosterman S.J."/>
            <person name="Deelstra H.J."/>
            <person name="Ortiz-Castellanos L."/>
            <person name="Li W."/>
            <person name="Sanchez-Alonso P."/>
            <person name="Schreier P.H."/>
            <person name="Haeuser-Hahn I."/>
            <person name="Vaupel M."/>
            <person name="Koopmann E."/>
            <person name="Friedrich G."/>
            <person name="Voss H."/>
            <person name="Schlueter T."/>
            <person name="Margolis J."/>
            <person name="Platt D."/>
            <person name="Swimmer C."/>
            <person name="Gnirke A."/>
            <person name="Chen F."/>
            <person name="Vysotskaia V."/>
            <person name="Mannhaupt G."/>
            <person name="Gueldener U."/>
            <person name="Muensterkoetter M."/>
            <person name="Haase D."/>
            <person name="Oesterheld M."/>
            <person name="Mewes H.-W."/>
            <person name="Mauceli E.W."/>
            <person name="DeCaprio D."/>
            <person name="Wade C.M."/>
            <person name="Butler J."/>
            <person name="Young S.K."/>
            <person name="Jaffe D.B."/>
            <person name="Calvo S.E."/>
            <person name="Nusbaum C."/>
            <person name="Galagan J.E."/>
            <person name="Birren B.W."/>
        </authorList>
    </citation>
    <scope>NUCLEOTIDE SEQUENCE [LARGE SCALE GENOMIC DNA]</scope>
    <source>
        <strain>DSM 14603 / FGSC 9021 / UM521</strain>
    </source>
</reference>
<reference key="2">
    <citation type="submission" date="2014-09" db="EMBL/GenBank/DDBJ databases">
        <authorList>
            <person name="Gueldener U."/>
            <person name="Muensterkoetter M."/>
            <person name="Walter M.C."/>
            <person name="Mannhaupt G."/>
            <person name="Kahmann R."/>
        </authorList>
    </citation>
    <scope>GENOME REANNOTATION</scope>
    <source>
        <strain>DSM 14603 / FGSC 9021 / UM521</strain>
    </source>
</reference>
<protein>
    <recommendedName>
        <fullName>Pre-rRNA-processing protein IPI3</fullName>
    </recommendedName>
</protein>
<comment type="function">
    <text evidence="1">Component of the RIX1 complex required for processing of ITS2 sequences from 35S pre-rRNA.</text>
</comment>
<comment type="subunit">
    <text evidence="1">Component of the RIX1 complex, composed of IPI1, RIX1/IPI2 and IPI3 in a 1:2:2 stoichiometry. The complex interacts (via RIX1) with MDN1 (via its hexameric AAA ATPase ring) and the pre-60S ribosome particles.</text>
</comment>
<comment type="subcellular location">
    <subcellularLocation>
        <location evidence="1">Nucleus</location>
    </subcellularLocation>
</comment>
<comment type="similarity">
    <text evidence="2">Belongs to the WD repeat IPI3/WDR18 family.</text>
</comment>
<proteinExistence type="inferred from homology"/>
<evidence type="ECO:0000250" key="1">
    <source>
        <dbReference type="UniProtKB" id="P53877"/>
    </source>
</evidence>
<evidence type="ECO:0000305" key="2"/>
<dbReference type="EMBL" id="CM003140">
    <property type="protein sequence ID" value="KIS71882.1"/>
    <property type="molecule type" value="Genomic_DNA"/>
</dbReference>
<dbReference type="RefSeq" id="XP_011386219.1">
    <property type="nucleotide sequence ID" value="XM_011387917.1"/>
</dbReference>
<dbReference type="SMR" id="Q4PHV3"/>
<dbReference type="FunCoup" id="Q4PHV3">
    <property type="interactions" value="292"/>
</dbReference>
<dbReference type="STRING" id="237631.Q4PHV3"/>
<dbReference type="EnsemblFungi" id="KIS71882">
    <property type="protein sequence ID" value="KIS71882"/>
    <property type="gene ID" value="UMAG_00310"/>
</dbReference>
<dbReference type="GeneID" id="23561652"/>
<dbReference type="KEGG" id="uma:UMAG_00310"/>
<dbReference type="VEuPathDB" id="FungiDB:UMAG_00310"/>
<dbReference type="eggNOG" id="KOG0646">
    <property type="taxonomic scope" value="Eukaryota"/>
</dbReference>
<dbReference type="HOGENOM" id="CLU_029749_4_0_1"/>
<dbReference type="InParanoid" id="Q4PHV3"/>
<dbReference type="OMA" id="AINDEMW"/>
<dbReference type="OrthoDB" id="756370at2759"/>
<dbReference type="Proteomes" id="UP000000561">
    <property type="component" value="Chromosome 1"/>
</dbReference>
<dbReference type="GO" id="GO:0005656">
    <property type="term" value="C:nuclear pre-replicative complex"/>
    <property type="evidence" value="ECO:0000318"/>
    <property type="project" value="GO_Central"/>
</dbReference>
<dbReference type="GO" id="GO:0120330">
    <property type="term" value="C:rixosome complex"/>
    <property type="evidence" value="ECO:0000318"/>
    <property type="project" value="GO_Central"/>
</dbReference>
<dbReference type="GO" id="GO:0006261">
    <property type="term" value="P:DNA-templated DNA replication"/>
    <property type="evidence" value="ECO:0000318"/>
    <property type="project" value="GO_Central"/>
</dbReference>
<dbReference type="GO" id="GO:0006364">
    <property type="term" value="P:rRNA processing"/>
    <property type="evidence" value="ECO:0000318"/>
    <property type="project" value="GO_Central"/>
</dbReference>
<dbReference type="FunFam" id="2.130.10.10:FF:001940">
    <property type="entry name" value="Pre-rRNA-processing protein IPI3"/>
    <property type="match status" value="1"/>
</dbReference>
<dbReference type="Gene3D" id="2.130.10.10">
    <property type="entry name" value="YVTN repeat-like/Quinoprotein amine dehydrogenase"/>
    <property type="match status" value="2"/>
</dbReference>
<dbReference type="InterPro" id="IPR020472">
    <property type="entry name" value="G-protein_beta_WD-40_rep"/>
</dbReference>
<dbReference type="InterPro" id="IPR015943">
    <property type="entry name" value="WD40/YVTN_repeat-like_dom_sf"/>
</dbReference>
<dbReference type="InterPro" id="IPR019775">
    <property type="entry name" value="WD40_repeat_CS"/>
</dbReference>
<dbReference type="InterPro" id="IPR036322">
    <property type="entry name" value="WD40_repeat_dom_sf"/>
</dbReference>
<dbReference type="InterPro" id="IPR001680">
    <property type="entry name" value="WD40_rpt"/>
</dbReference>
<dbReference type="InterPro" id="IPR045227">
    <property type="entry name" value="WDR18/Ipi3/RID3"/>
</dbReference>
<dbReference type="PANTHER" id="PTHR18763:SF0">
    <property type="entry name" value="WD REPEAT-CONTAINING PROTEIN 18"/>
    <property type="match status" value="1"/>
</dbReference>
<dbReference type="PANTHER" id="PTHR18763">
    <property type="entry name" value="WD-REPEAT PROTEIN 18"/>
    <property type="match status" value="1"/>
</dbReference>
<dbReference type="Pfam" id="PF00400">
    <property type="entry name" value="WD40"/>
    <property type="match status" value="3"/>
</dbReference>
<dbReference type="PRINTS" id="PR00320">
    <property type="entry name" value="GPROTEINBRPT"/>
</dbReference>
<dbReference type="SMART" id="SM00320">
    <property type="entry name" value="WD40"/>
    <property type="match status" value="4"/>
</dbReference>
<dbReference type="SUPFAM" id="SSF50978">
    <property type="entry name" value="WD40 repeat-like"/>
    <property type="match status" value="1"/>
</dbReference>
<dbReference type="PROSITE" id="PS00678">
    <property type="entry name" value="WD_REPEATS_1"/>
    <property type="match status" value="1"/>
</dbReference>
<dbReference type="PROSITE" id="PS50082">
    <property type="entry name" value="WD_REPEATS_2"/>
    <property type="match status" value="3"/>
</dbReference>
<dbReference type="PROSITE" id="PS50294">
    <property type="entry name" value="WD_REPEATS_REGION"/>
    <property type="match status" value="1"/>
</dbReference>
<gene>
    <name type="primary">IPI3</name>
    <name type="ORF">UMAG_00310</name>
</gene>
<feature type="chain" id="PRO_0000308744" description="Pre-rRNA-processing protein IPI3">
    <location>
        <begin position="1"/>
        <end position="587"/>
    </location>
</feature>
<feature type="repeat" description="WD 1">
    <location>
        <begin position="101"/>
        <end position="142"/>
    </location>
</feature>
<feature type="repeat" description="WD 2">
    <location>
        <begin position="144"/>
        <end position="182"/>
    </location>
</feature>
<feature type="repeat" description="WD 3">
    <location>
        <begin position="203"/>
        <end position="246"/>
    </location>
</feature>
<feature type="repeat" description="WD 4">
    <location>
        <begin position="353"/>
        <end position="392"/>
    </location>
</feature>
<name>IPI3_MYCMD</name>
<keyword id="KW-0539">Nucleus</keyword>
<keyword id="KW-1185">Reference proteome</keyword>
<keyword id="KW-0677">Repeat</keyword>
<keyword id="KW-0690">Ribosome biogenesis</keyword>
<keyword id="KW-0698">rRNA processing</keyword>
<keyword id="KW-0853">WD repeat</keyword>
<accession>Q4PHV3</accession>
<accession>A0A0D1CFV0</accession>